<comment type="function">
    <text evidence="1">Inhibits all the catalytic activities of DNA gyrase by preventing its interaction with DNA. Acts by binding directly to the C-terminal domain of GyrB, which probably disrupts DNA binding by the gyrase.</text>
</comment>
<comment type="cofactor">
    <cofactor evidence="1">
        <name>Zn(2+)</name>
        <dbReference type="ChEBI" id="CHEBI:29105"/>
    </cofactor>
    <text evidence="1">Binds 1 zinc ion.</text>
</comment>
<comment type="subunit">
    <text evidence="1">Interacts with GyrB.</text>
</comment>
<comment type="similarity">
    <text evidence="1">Belongs to the DNA gyrase inhibitor YacG family.</text>
</comment>
<feature type="chain" id="PRO_1000056972" description="DNA gyrase inhibitor YacG">
    <location>
        <begin position="1"/>
        <end position="65"/>
    </location>
</feature>
<feature type="region of interest" description="Disordered" evidence="2">
    <location>
        <begin position="45"/>
        <end position="65"/>
    </location>
</feature>
<feature type="compositionally biased region" description="Acidic residues" evidence="2">
    <location>
        <begin position="54"/>
        <end position="65"/>
    </location>
</feature>
<feature type="binding site" evidence="1">
    <location>
        <position position="9"/>
    </location>
    <ligand>
        <name>Zn(2+)</name>
        <dbReference type="ChEBI" id="CHEBI:29105"/>
    </ligand>
</feature>
<feature type="binding site" evidence="1">
    <location>
        <position position="12"/>
    </location>
    <ligand>
        <name>Zn(2+)</name>
        <dbReference type="ChEBI" id="CHEBI:29105"/>
    </ligand>
</feature>
<feature type="binding site" evidence="1">
    <location>
        <position position="28"/>
    </location>
    <ligand>
        <name>Zn(2+)</name>
        <dbReference type="ChEBI" id="CHEBI:29105"/>
    </ligand>
</feature>
<feature type="binding site" evidence="1">
    <location>
        <position position="32"/>
    </location>
    <ligand>
        <name>Zn(2+)</name>
        <dbReference type="ChEBI" id="CHEBI:29105"/>
    </ligand>
</feature>
<evidence type="ECO:0000255" key="1">
    <source>
        <dbReference type="HAMAP-Rule" id="MF_00649"/>
    </source>
</evidence>
<evidence type="ECO:0000256" key="2">
    <source>
        <dbReference type="SAM" id="MobiDB-lite"/>
    </source>
</evidence>
<name>YACG_ECOUT</name>
<proteinExistence type="inferred from homology"/>
<reference key="1">
    <citation type="journal article" date="2006" name="Proc. Natl. Acad. Sci. U.S.A.">
        <title>Identification of genes subject to positive selection in uropathogenic strains of Escherichia coli: a comparative genomics approach.</title>
        <authorList>
            <person name="Chen S.L."/>
            <person name="Hung C.-S."/>
            <person name="Xu J."/>
            <person name="Reigstad C.S."/>
            <person name="Magrini V."/>
            <person name="Sabo A."/>
            <person name="Blasiar D."/>
            <person name="Bieri T."/>
            <person name="Meyer R.R."/>
            <person name="Ozersky P."/>
            <person name="Armstrong J.R."/>
            <person name="Fulton R.S."/>
            <person name="Latreille J.P."/>
            <person name="Spieth J."/>
            <person name="Hooton T.M."/>
            <person name="Mardis E.R."/>
            <person name="Hultgren S.J."/>
            <person name="Gordon J.I."/>
        </authorList>
    </citation>
    <scope>NUCLEOTIDE SEQUENCE [LARGE SCALE GENOMIC DNA]</scope>
    <source>
        <strain>UTI89 / UPEC</strain>
    </source>
</reference>
<dbReference type="EMBL" id="CP000243">
    <property type="protein sequence ID" value="ABE05619.1"/>
    <property type="molecule type" value="Genomic_DNA"/>
</dbReference>
<dbReference type="RefSeq" id="WP_000005042.1">
    <property type="nucleotide sequence ID" value="NZ_CP064825.1"/>
</dbReference>
<dbReference type="SMR" id="Q1RG95"/>
<dbReference type="GeneID" id="93777334"/>
<dbReference type="KEGG" id="eci:UTI89_C0109"/>
<dbReference type="HOGENOM" id="CLU_178280_3_1_6"/>
<dbReference type="Proteomes" id="UP000001952">
    <property type="component" value="Chromosome"/>
</dbReference>
<dbReference type="GO" id="GO:0008657">
    <property type="term" value="F:DNA topoisomerase type II (double strand cut, ATP-hydrolyzing) inhibitor activity"/>
    <property type="evidence" value="ECO:0007669"/>
    <property type="project" value="UniProtKB-UniRule"/>
</dbReference>
<dbReference type="GO" id="GO:0008270">
    <property type="term" value="F:zinc ion binding"/>
    <property type="evidence" value="ECO:0007669"/>
    <property type="project" value="UniProtKB-UniRule"/>
</dbReference>
<dbReference type="GO" id="GO:0006355">
    <property type="term" value="P:regulation of DNA-templated transcription"/>
    <property type="evidence" value="ECO:0007669"/>
    <property type="project" value="InterPro"/>
</dbReference>
<dbReference type="FunFam" id="3.30.50.10:FF:000026">
    <property type="entry name" value="DNA gyrase inhibitor YacG"/>
    <property type="match status" value="1"/>
</dbReference>
<dbReference type="Gene3D" id="3.30.50.10">
    <property type="entry name" value="Erythroid Transcription Factor GATA-1, subunit A"/>
    <property type="match status" value="1"/>
</dbReference>
<dbReference type="HAMAP" id="MF_00649">
    <property type="entry name" value="DNA_gyrase_inhibitor_YacG"/>
    <property type="match status" value="1"/>
</dbReference>
<dbReference type="InterPro" id="IPR005584">
    <property type="entry name" value="DNA_gyrase_inhibitor_YacG"/>
</dbReference>
<dbReference type="InterPro" id="IPR013088">
    <property type="entry name" value="Znf_NHR/GATA"/>
</dbReference>
<dbReference type="NCBIfam" id="NF001638">
    <property type="entry name" value="PRK00418.1"/>
    <property type="match status" value="1"/>
</dbReference>
<dbReference type="PANTHER" id="PTHR36150">
    <property type="entry name" value="DNA GYRASE INHIBITOR YACG"/>
    <property type="match status" value="1"/>
</dbReference>
<dbReference type="PANTHER" id="PTHR36150:SF1">
    <property type="entry name" value="DNA GYRASE INHIBITOR YACG"/>
    <property type="match status" value="1"/>
</dbReference>
<dbReference type="Pfam" id="PF03884">
    <property type="entry name" value="YacG"/>
    <property type="match status" value="1"/>
</dbReference>
<dbReference type="SUPFAM" id="SSF57716">
    <property type="entry name" value="Glucocorticoid receptor-like (DNA-binding domain)"/>
    <property type="match status" value="1"/>
</dbReference>
<keyword id="KW-0479">Metal-binding</keyword>
<keyword id="KW-0862">Zinc</keyword>
<protein>
    <recommendedName>
        <fullName evidence="1">DNA gyrase inhibitor YacG</fullName>
    </recommendedName>
</protein>
<sequence length="65" mass="7306">MSETITVNCPTCGKTVVWGEISPFRPFCSKRCQLIDLGEWAAEEKRIPSSGDLSESDDWSEEPKQ</sequence>
<gene>
    <name evidence="1" type="primary">yacG</name>
    <name type="ordered locus">UTI89_C0109</name>
</gene>
<accession>Q1RG95</accession>
<organism>
    <name type="scientific">Escherichia coli (strain UTI89 / UPEC)</name>
    <dbReference type="NCBI Taxonomy" id="364106"/>
    <lineage>
        <taxon>Bacteria</taxon>
        <taxon>Pseudomonadati</taxon>
        <taxon>Pseudomonadota</taxon>
        <taxon>Gammaproteobacteria</taxon>
        <taxon>Enterobacterales</taxon>
        <taxon>Enterobacteriaceae</taxon>
        <taxon>Escherichia</taxon>
    </lineage>
</organism>